<protein>
    <recommendedName>
        <fullName>Uncharacterized protein YabS</fullName>
    </recommendedName>
</protein>
<keyword id="KW-1185">Reference proteome</keyword>
<name>YABS_BACSU</name>
<gene>
    <name type="primary">yabS</name>
    <name type="ordered locus">BSU00650</name>
</gene>
<sequence length="245" mass="26776">MNNGHLNQILLITDGCSNHGEDPLAMAAFAKEQGITVNVIGIMEENQIDPEAMKEVEGIALAGGGVHQVVYASQLSQTVQMVTKKAMTQTLQGVVNQELKQILGKNVEMEELSPEKRGEVMEVVDELGETVHLQVLVLVDTSASMAPKLPTVKEALIDLSVSLNSRIGNNEFAMCIFPGKKQEVELVLNWTPKLQSLSTLFAKLSTGGITPTGPAIREATLQFEKIRSRRGMLADDERRFDEFGM</sequence>
<reference key="1">
    <citation type="journal article" date="1994" name="DNA Res.">
        <title>Systematic sequencing of the 180 kilobase region of the Bacillus subtilis chromosome containing the replication origin.</title>
        <authorList>
            <person name="Ogasawara N."/>
            <person name="Nakai S."/>
            <person name="Yoshikawa H."/>
        </authorList>
    </citation>
    <scope>NUCLEOTIDE SEQUENCE [GENOMIC DNA]</scope>
    <source>
        <strain>168</strain>
    </source>
</reference>
<reference key="2">
    <citation type="journal article" date="1997" name="Nature">
        <title>The complete genome sequence of the Gram-positive bacterium Bacillus subtilis.</title>
        <authorList>
            <person name="Kunst F."/>
            <person name="Ogasawara N."/>
            <person name="Moszer I."/>
            <person name="Albertini A.M."/>
            <person name="Alloni G."/>
            <person name="Azevedo V."/>
            <person name="Bertero M.G."/>
            <person name="Bessieres P."/>
            <person name="Bolotin A."/>
            <person name="Borchert S."/>
            <person name="Borriss R."/>
            <person name="Boursier L."/>
            <person name="Brans A."/>
            <person name="Braun M."/>
            <person name="Brignell S.C."/>
            <person name="Bron S."/>
            <person name="Brouillet S."/>
            <person name="Bruschi C.V."/>
            <person name="Caldwell B."/>
            <person name="Capuano V."/>
            <person name="Carter N.M."/>
            <person name="Choi S.-K."/>
            <person name="Codani J.-J."/>
            <person name="Connerton I.F."/>
            <person name="Cummings N.J."/>
            <person name="Daniel R.A."/>
            <person name="Denizot F."/>
            <person name="Devine K.M."/>
            <person name="Duesterhoeft A."/>
            <person name="Ehrlich S.D."/>
            <person name="Emmerson P.T."/>
            <person name="Entian K.-D."/>
            <person name="Errington J."/>
            <person name="Fabret C."/>
            <person name="Ferrari E."/>
            <person name="Foulger D."/>
            <person name="Fritz C."/>
            <person name="Fujita M."/>
            <person name="Fujita Y."/>
            <person name="Fuma S."/>
            <person name="Galizzi A."/>
            <person name="Galleron N."/>
            <person name="Ghim S.-Y."/>
            <person name="Glaser P."/>
            <person name="Goffeau A."/>
            <person name="Golightly E.J."/>
            <person name="Grandi G."/>
            <person name="Guiseppi G."/>
            <person name="Guy B.J."/>
            <person name="Haga K."/>
            <person name="Haiech J."/>
            <person name="Harwood C.R."/>
            <person name="Henaut A."/>
            <person name="Hilbert H."/>
            <person name="Holsappel S."/>
            <person name="Hosono S."/>
            <person name="Hullo M.-F."/>
            <person name="Itaya M."/>
            <person name="Jones L.-M."/>
            <person name="Joris B."/>
            <person name="Karamata D."/>
            <person name="Kasahara Y."/>
            <person name="Klaerr-Blanchard M."/>
            <person name="Klein C."/>
            <person name="Kobayashi Y."/>
            <person name="Koetter P."/>
            <person name="Koningstein G."/>
            <person name="Krogh S."/>
            <person name="Kumano M."/>
            <person name="Kurita K."/>
            <person name="Lapidus A."/>
            <person name="Lardinois S."/>
            <person name="Lauber J."/>
            <person name="Lazarevic V."/>
            <person name="Lee S.-M."/>
            <person name="Levine A."/>
            <person name="Liu H."/>
            <person name="Masuda S."/>
            <person name="Mauel C."/>
            <person name="Medigue C."/>
            <person name="Medina N."/>
            <person name="Mellado R.P."/>
            <person name="Mizuno M."/>
            <person name="Moestl D."/>
            <person name="Nakai S."/>
            <person name="Noback M."/>
            <person name="Noone D."/>
            <person name="O'Reilly M."/>
            <person name="Ogawa K."/>
            <person name="Ogiwara A."/>
            <person name="Oudega B."/>
            <person name="Park S.-H."/>
            <person name="Parro V."/>
            <person name="Pohl T.M."/>
            <person name="Portetelle D."/>
            <person name="Porwollik S."/>
            <person name="Prescott A.M."/>
            <person name="Presecan E."/>
            <person name="Pujic P."/>
            <person name="Purnelle B."/>
            <person name="Rapoport G."/>
            <person name="Rey M."/>
            <person name="Reynolds S."/>
            <person name="Rieger M."/>
            <person name="Rivolta C."/>
            <person name="Rocha E."/>
            <person name="Roche B."/>
            <person name="Rose M."/>
            <person name="Sadaie Y."/>
            <person name="Sato T."/>
            <person name="Scanlan E."/>
            <person name="Schleich S."/>
            <person name="Schroeter R."/>
            <person name="Scoffone F."/>
            <person name="Sekiguchi J."/>
            <person name="Sekowska A."/>
            <person name="Seror S.J."/>
            <person name="Serror P."/>
            <person name="Shin B.-S."/>
            <person name="Soldo B."/>
            <person name="Sorokin A."/>
            <person name="Tacconi E."/>
            <person name="Takagi T."/>
            <person name="Takahashi H."/>
            <person name="Takemaru K."/>
            <person name="Takeuchi M."/>
            <person name="Tamakoshi A."/>
            <person name="Tanaka T."/>
            <person name="Terpstra P."/>
            <person name="Tognoni A."/>
            <person name="Tosato V."/>
            <person name="Uchiyama S."/>
            <person name="Vandenbol M."/>
            <person name="Vannier F."/>
            <person name="Vassarotti A."/>
            <person name="Viari A."/>
            <person name="Wambutt R."/>
            <person name="Wedler E."/>
            <person name="Wedler H."/>
            <person name="Weitzenegger T."/>
            <person name="Winters P."/>
            <person name="Wipat A."/>
            <person name="Yamamoto H."/>
            <person name="Yamane K."/>
            <person name="Yasumoto K."/>
            <person name="Yata K."/>
            <person name="Yoshida K."/>
            <person name="Yoshikawa H.-F."/>
            <person name="Zumstein E."/>
            <person name="Yoshikawa H."/>
            <person name="Danchin A."/>
        </authorList>
    </citation>
    <scope>NUCLEOTIDE SEQUENCE [LARGE SCALE GENOMIC DNA]</scope>
    <source>
        <strain>168</strain>
    </source>
</reference>
<accession>P37561</accession>
<proteinExistence type="predicted"/>
<dbReference type="EMBL" id="D26185">
    <property type="protein sequence ID" value="BAA05300.1"/>
    <property type="molecule type" value="Genomic_DNA"/>
</dbReference>
<dbReference type="EMBL" id="AL009126">
    <property type="protein sequence ID" value="CAB11841.1"/>
    <property type="molecule type" value="Genomic_DNA"/>
</dbReference>
<dbReference type="PIR" id="S66095">
    <property type="entry name" value="S66095"/>
</dbReference>
<dbReference type="RefSeq" id="NP_387946.1">
    <property type="nucleotide sequence ID" value="NC_000964.3"/>
</dbReference>
<dbReference type="RefSeq" id="WP_003243782.1">
    <property type="nucleotide sequence ID" value="NZ_OZ025638.1"/>
</dbReference>
<dbReference type="SMR" id="P37561"/>
<dbReference type="FunCoup" id="P37561">
    <property type="interactions" value="70"/>
</dbReference>
<dbReference type="IntAct" id="P37561">
    <property type="interactions" value="1"/>
</dbReference>
<dbReference type="STRING" id="224308.BSU00650"/>
<dbReference type="PaxDb" id="224308-BSU00650"/>
<dbReference type="EnsemblBacteria" id="CAB11841">
    <property type="protein sequence ID" value="CAB11841"/>
    <property type="gene ID" value="BSU_00650"/>
</dbReference>
<dbReference type="GeneID" id="936965"/>
<dbReference type="KEGG" id="bsu:BSU00650"/>
<dbReference type="PATRIC" id="fig|224308.43.peg.66"/>
<dbReference type="eggNOG" id="COG2304">
    <property type="taxonomic scope" value="Bacteria"/>
</dbReference>
<dbReference type="InParanoid" id="P37561"/>
<dbReference type="OrthoDB" id="2960279at2"/>
<dbReference type="BioCyc" id="BSUB:BSU00650-MONOMER"/>
<dbReference type="Proteomes" id="UP000001570">
    <property type="component" value="Chromosome"/>
</dbReference>
<dbReference type="CDD" id="cd00198">
    <property type="entry name" value="vWFA"/>
    <property type="match status" value="1"/>
</dbReference>
<dbReference type="Gene3D" id="3.40.50.410">
    <property type="entry name" value="von Willebrand factor, type A domain"/>
    <property type="match status" value="1"/>
</dbReference>
<dbReference type="InterPro" id="IPR002035">
    <property type="entry name" value="VWF_A"/>
</dbReference>
<dbReference type="InterPro" id="IPR036465">
    <property type="entry name" value="vWFA_dom_sf"/>
</dbReference>
<dbReference type="SUPFAM" id="SSF53300">
    <property type="entry name" value="vWA-like"/>
    <property type="match status" value="2"/>
</dbReference>
<dbReference type="PROSITE" id="PS50234">
    <property type="entry name" value="VWFA"/>
    <property type="match status" value="1"/>
</dbReference>
<organism>
    <name type="scientific">Bacillus subtilis (strain 168)</name>
    <dbReference type="NCBI Taxonomy" id="224308"/>
    <lineage>
        <taxon>Bacteria</taxon>
        <taxon>Bacillati</taxon>
        <taxon>Bacillota</taxon>
        <taxon>Bacilli</taxon>
        <taxon>Bacillales</taxon>
        <taxon>Bacillaceae</taxon>
        <taxon>Bacillus</taxon>
    </lineage>
</organism>
<feature type="chain" id="PRO_0000049447" description="Uncharacterized protein YabS">
    <location>
        <begin position="1"/>
        <end position="245"/>
    </location>
</feature>